<keyword id="KW-0975">Bacterial flagellum</keyword>
<keyword id="KW-0998">Cell outer membrane</keyword>
<keyword id="KW-0449">Lipoprotein</keyword>
<keyword id="KW-0472">Membrane</keyword>
<keyword id="KW-0564">Palmitate</keyword>
<keyword id="KW-0732">Signal</keyword>
<dbReference type="EMBL" id="CP000026">
    <property type="protein sequence ID" value="AAV77596.1"/>
    <property type="molecule type" value="Genomic_DNA"/>
</dbReference>
<dbReference type="RefSeq" id="WP_001174897.1">
    <property type="nucleotide sequence ID" value="NC_006511.1"/>
</dbReference>
<dbReference type="SMR" id="Q5PGU6"/>
<dbReference type="KEGG" id="spt:SPA1671"/>
<dbReference type="HOGENOM" id="CLU_069313_0_0_6"/>
<dbReference type="Proteomes" id="UP000008185">
    <property type="component" value="Chromosome"/>
</dbReference>
<dbReference type="GO" id="GO:0009427">
    <property type="term" value="C:bacterial-type flagellum basal body, distal rod, L ring"/>
    <property type="evidence" value="ECO:0007669"/>
    <property type="project" value="InterPro"/>
</dbReference>
<dbReference type="GO" id="GO:0009279">
    <property type="term" value="C:cell outer membrane"/>
    <property type="evidence" value="ECO:0007669"/>
    <property type="project" value="UniProtKB-SubCell"/>
</dbReference>
<dbReference type="GO" id="GO:0003774">
    <property type="term" value="F:cytoskeletal motor activity"/>
    <property type="evidence" value="ECO:0007669"/>
    <property type="project" value="InterPro"/>
</dbReference>
<dbReference type="GO" id="GO:0071973">
    <property type="term" value="P:bacterial-type flagellum-dependent cell motility"/>
    <property type="evidence" value="ECO:0007669"/>
    <property type="project" value="InterPro"/>
</dbReference>
<dbReference type="HAMAP" id="MF_00415">
    <property type="entry name" value="FlgH"/>
    <property type="match status" value="1"/>
</dbReference>
<dbReference type="InterPro" id="IPR000527">
    <property type="entry name" value="Flag_Lring"/>
</dbReference>
<dbReference type="NCBIfam" id="NF001301">
    <property type="entry name" value="PRK00249.1-1"/>
    <property type="match status" value="1"/>
</dbReference>
<dbReference type="PANTHER" id="PTHR34933">
    <property type="entry name" value="FLAGELLAR L-RING PROTEIN"/>
    <property type="match status" value="1"/>
</dbReference>
<dbReference type="PANTHER" id="PTHR34933:SF3">
    <property type="entry name" value="FLAGELLAR L-RING PROTEIN"/>
    <property type="match status" value="1"/>
</dbReference>
<dbReference type="Pfam" id="PF02107">
    <property type="entry name" value="FlgH"/>
    <property type="match status" value="1"/>
</dbReference>
<dbReference type="PRINTS" id="PR01008">
    <property type="entry name" value="FLGLRINGFLGH"/>
</dbReference>
<dbReference type="PROSITE" id="PS51257">
    <property type="entry name" value="PROKAR_LIPOPROTEIN"/>
    <property type="match status" value="1"/>
</dbReference>
<sequence length="232" mass="24709">MQKYALHAYPVMALMVATLTGCAWIPAKPLVQGATTAQPIPGPVPVANGSIFQSAQPINYGYQPLFEDRRPRNIGDTLTIVLQENVSASKSSSANASRDGKTSFGFDTVPRYLQGLFGNSRADMEASGGNSFNGKGGANASNTFSGTLTVTVDQVLANGNLHVVGEKQIAINQGTEFIRFSGVVNPRTISGSNSVPSTQVADARIEYVGNGYINEAQNMGWLQRFFLNLSPM</sequence>
<accession>Q5PGU6</accession>
<reference key="1">
    <citation type="journal article" date="2004" name="Nat. Genet.">
        <title>Comparison of genome degradation in Paratyphi A and Typhi, human-restricted serovars of Salmonella enterica that cause typhoid.</title>
        <authorList>
            <person name="McClelland M."/>
            <person name="Sanderson K.E."/>
            <person name="Clifton S.W."/>
            <person name="Latreille P."/>
            <person name="Porwollik S."/>
            <person name="Sabo A."/>
            <person name="Meyer R."/>
            <person name="Bieri T."/>
            <person name="Ozersky P."/>
            <person name="McLellan M."/>
            <person name="Harkins C.R."/>
            <person name="Wang C."/>
            <person name="Nguyen C."/>
            <person name="Berghoff A."/>
            <person name="Elliott G."/>
            <person name="Kohlberg S."/>
            <person name="Strong C."/>
            <person name="Du F."/>
            <person name="Carter J."/>
            <person name="Kremizki C."/>
            <person name="Layman D."/>
            <person name="Leonard S."/>
            <person name="Sun H."/>
            <person name="Fulton L."/>
            <person name="Nash W."/>
            <person name="Miner T."/>
            <person name="Minx P."/>
            <person name="Delehaunty K."/>
            <person name="Fronick C."/>
            <person name="Magrini V."/>
            <person name="Nhan M."/>
            <person name="Warren W."/>
            <person name="Florea L."/>
            <person name="Spieth J."/>
            <person name="Wilson R.K."/>
        </authorList>
    </citation>
    <scope>NUCLEOTIDE SEQUENCE [LARGE SCALE GENOMIC DNA]</scope>
    <source>
        <strain>ATCC 9150 / SARB42</strain>
    </source>
</reference>
<feature type="signal peptide" evidence="1">
    <location>
        <begin position="1"/>
        <end position="21"/>
    </location>
</feature>
<feature type="chain" id="PRO_0000009469" description="Flagellar L-ring protein">
    <location>
        <begin position="22"/>
        <end position="232"/>
    </location>
</feature>
<feature type="lipid moiety-binding region" description="N-palmitoyl cysteine" evidence="1">
    <location>
        <position position="22"/>
    </location>
</feature>
<feature type="lipid moiety-binding region" description="S-diacylglycerol cysteine" evidence="1">
    <location>
        <position position="22"/>
    </location>
</feature>
<name>FLGH_SALPA</name>
<gene>
    <name evidence="1" type="primary">flgH</name>
    <name type="ordered locus">SPA1671</name>
</gene>
<protein>
    <recommendedName>
        <fullName evidence="1">Flagellar L-ring protein</fullName>
    </recommendedName>
    <alternativeName>
        <fullName evidence="1">Basal body L-ring protein</fullName>
    </alternativeName>
</protein>
<proteinExistence type="inferred from homology"/>
<comment type="function">
    <text evidence="1">Assembles around the rod to form the L-ring and probably protects the motor/basal body from shearing forces during rotation.</text>
</comment>
<comment type="subunit">
    <text evidence="1">The basal body constitutes a major portion of the flagellar organelle and consists of four rings (L,P,S, and M) mounted on a central rod.</text>
</comment>
<comment type="subcellular location">
    <subcellularLocation>
        <location evidence="1">Cell outer membrane</location>
        <topology evidence="1">Lipid-anchor</topology>
    </subcellularLocation>
    <subcellularLocation>
        <location evidence="1">Bacterial flagellum basal body</location>
    </subcellularLocation>
</comment>
<comment type="similarity">
    <text evidence="1">Belongs to the FlgH family.</text>
</comment>
<organism>
    <name type="scientific">Salmonella paratyphi A (strain ATCC 9150 / SARB42)</name>
    <dbReference type="NCBI Taxonomy" id="295319"/>
    <lineage>
        <taxon>Bacteria</taxon>
        <taxon>Pseudomonadati</taxon>
        <taxon>Pseudomonadota</taxon>
        <taxon>Gammaproteobacteria</taxon>
        <taxon>Enterobacterales</taxon>
        <taxon>Enterobacteriaceae</taxon>
        <taxon>Salmonella</taxon>
    </lineage>
</organism>
<evidence type="ECO:0000255" key="1">
    <source>
        <dbReference type="HAMAP-Rule" id="MF_00415"/>
    </source>
</evidence>